<organism>
    <name type="scientific">Helicobacter pylori (strain HPAG1)</name>
    <dbReference type="NCBI Taxonomy" id="357544"/>
    <lineage>
        <taxon>Bacteria</taxon>
        <taxon>Pseudomonadati</taxon>
        <taxon>Campylobacterota</taxon>
        <taxon>Epsilonproteobacteria</taxon>
        <taxon>Campylobacterales</taxon>
        <taxon>Helicobacteraceae</taxon>
        <taxon>Helicobacter</taxon>
    </lineage>
</organism>
<feature type="chain" id="PRO_0000350210" description="Dual-specificity RNA methyltransferase RlmN">
    <location>
        <begin position="1"/>
        <end position="357"/>
    </location>
</feature>
<feature type="domain" description="Radical SAM core" evidence="2">
    <location>
        <begin position="109"/>
        <end position="340"/>
    </location>
</feature>
<feature type="active site" description="Proton acceptor" evidence="1">
    <location>
        <position position="89"/>
    </location>
</feature>
<feature type="active site" description="S-methylcysteine intermediate" evidence="1">
    <location>
        <position position="345"/>
    </location>
</feature>
<feature type="binding site" evidence="1">
    <location>
        <position position="123"/>
    </location>
    <ligand>
        <name>[4Fe-4S] cluster</name>
        <dbReference type="ChEBI" id="CHEBI:49883"/>
        <note>4Fe-4S-S-AdoMet</note>
    </ligand>
</feature>
<feature type="binding site" evidence="1">
    <location>
        <position position="127"/>
    </location>
    <ligand>
        <name>[4Fe-4S] cluster</name>
        <dbReference type="ChEBI" id="CHEBI:49883"/>
        <note>4Fe-4S-S-AdoMet</note>
    </ligand>
</feature>
<feature type="binding site" evidence="1">
    <location>
        <position position="130"/>
    </location>
    <ligand>
        <name>[4Fe-4S] cluster</name>
        <dbReference type="ChEBI" id="CHEBI:49883"/>
        <note>4Fe-4S-S-AdoMet</note>
    </ligand>
</feature>
<feature type="binding site" evidence="1">
    <location>
        <begin position="173"/>
        <end position="174"/>
    </location>
    <ligand>
        <name>S-adenosyl-L-methionine</name>
        <dbReference type="ChEBI" id="CHEBI:59789"/>
    </ligand>
</feature>
<feature type="binding site" evidence="1">
    <location>
        <position position="203"/>
    </location>
    <ligand>
        <name>S-adenosyl-L-methionine</name>
        <dbReference type="ChEBI" id="CHEBI:59789"/>
    </ligand>
</feature>
<feature type="binding site" evidence="1">
    <location>
        <begin position="226"/>
        <end position="228"/>
    </location>
    <ligand>
        <name>S-adenosyl-L-methionine</name>
        <dbReference type="ChEBI" id="CHEBI:59789"/>
    </ligand>
</feature>
<feature type="binding site" evidence="1">
    <location>
        <position position="302"/>
    </location>
    <ligand>
        <name>S-adenosyl-L-methionine</name>
        <dbReference type="ChEBI" id="CHEBI:59789"/>
    </ligand>
</feature>
<feature type="disulfide bond" description="(transient)" evidence="1">
    <location>
        <begin position="116"/>
        <end position="345"/>
    </location>
</feature>
<reference key="1">
    <citation type="journal article" date="2006" name="Proc. Natl. Acad. Sci. U.S.A.">
        <title>The complete genome sequence of a chronic atrophic gastritis Helicobacter pylori strain: evolution during disease progression.</title>
        <authorList>
            <person name="Oh J.D."/>
            <person name="Kling-Baeckhed H."/>
            <person name="Giannakis M."/>
            <person name="Xu J."/>
            <person name="Fulton R.S."/>
            <person name="Fulton L.A."/>
            <person name="Cordum H.S."/>
            <person name="Wang C."/>
            <person name="Elliott G."/>
            <person name="Edwards J."/>
            <person name="Mardis E.R."/>
            <person name="Engstrand L.G."/>
            <person name="Gordon J.I."/>
        </authorList>
    </citation>
    <scope>NUCLEOTIDE SEQUENCE [LARGE SCALE GENOMIC DNA]</scope>
    <source>
        <strain>HPAG1</strain>
    </source>
</reference>
<sequence>MKASIYDFTLDELSQLLKPSFRAKQLYLWLYAKYKTSFKDMQNNFSKDFIAYLEREFTLRTIEITHVRKSVDGSKKYLFKSLRDNHTFEAVLLKMKDKKIDEKTNAILEGEKYTVCVSCQIGCQVGCSFCFTQKGGFVRNLKASEIIQQALLIKEDNNLPIEKALNIVFMGMGEPLNNLDEVCKAIEIFNTGMQISPRRITVSTSGVADKIPILAGKNLGVQLAISLHAVDDKTRSSLMPLNKKYNIECVLNEVRKWPLEQRKRVMFEYLLIKDLNDSLDCAKKLLKLLNGIKSKVNLILFNPHEGSKFERPSLESARMFADFLNSKGLLCTIRESKALDIEAACGQLREKKLSQQI</sequence>
<proteinExistence type="inferred from homology"/>
<name>RLMN_HELPH</name>
<accession>Q1CRK2</accession>
<comment type="function">
    <text evidence="1">Specifically methylates position 2 of adenine 2503 in 23S rRNA and position 2 of adenine 37 in tRNAs. m2A2503 modification seems to play a crucial role in the proofreading step occurring at the peptidyl transferase center and thus would serve to optimize ribosomal fidelity.</text>
</comment>
<comment type="catalytic activity">
    <reaction evidence="1">
        <text>adenosine(2503) in 23S rRNA + 2 reduced [2Fe-2S]-[ferredoxin] + 2 S-adenosyl-L-methionine = 2-methyladenosine(2503) in 23S rRNA + 5'-deoxyadenosine + L-methionine + 2 oxidized [2Fe-2S]-[ferredoxin] + S-adenosyl-L-homocysteine</text>
        <dbReference type="Rhea" id="RHEA:42916"/>
        <dbReference type="Rhea" id="RHEA-COMP:10000"/>
        <dbReference type="Rhea" id="RHEA-COMP:10001"/>
        <dbReference type="Rhea" id="RHEA-COMP:10152"/>
        <dbReference type="Rhea" id="RHEA-COMP:10282"/>
        <dbReference type="ChEBI" id="CHEBI:17319"/>
        <dbReference type="ChEBI" id="CHEBI:33737"/>
        <dbReference type="ChEBI" id="CHEBI:33738"/>
        <dbReference type="ChEBI" id="CHEBI:57844"/>
        <dbReference type="ChEBI" id="CHEBI:57856"/>
        <dbReference type="ChEBI" id="CHEBI:59789"/>
        <dbReference type="ChEBI" id="CHEBI:74411"/>
        <dbReference type="ChEBI" id="CHEBI:74497"/>
        <dbReference type="EC" id="2.1.1.192"/>
    </reaction>
</comment>
<comment type="catalytic activity">
    <reaction evidence="1">
        <text>adenosine(37) in tRNA + 2 reduced [2Fe-2S]-[ferredoxin] + 2 S-adenosyl-L-methionine = 2-methyladenosine(37) in tRNA + 5'-deoxyadenosine + L-methionine + 2 oxidized [2Fe-2S]-[ferredoxin] + S-adenosyl-L-homocysteine</text>
        <dbReference type="Rhea" id="RHEA:43332"/>
        <dbReference type="Rhea" id="RHEA-COMP:10000"/>
        <dbReference type="Rhea" id="RHEA-COMP:10001"/>
        <dbReference type="Rhea" id="RHEA-COMP:10162"/>
        <dbReference type="Rhea" id="RHEA-COMP:10485"/>
        <dbReference type="ChEBI" id="CHEBI:17319"/>
        <dbReference type="ChEBI" id="CHEBI:33737"/>
        <dbReference type="ChEBI" id="CHEBI:33738"/>
        <dbReference type="ChEBI" id="CHEBI:57844"/>
        <dbReference type="ChEBI" id="CHEBI:57856"/>
        <dbReference type="ChEBI" id="CHEBI:59789"/>
        <dbReference type="ChEBI" id="CHEBI:74411"/>
        <dbReference type="ChEBI" id="CHEBI:74497"/>
        <dbReference type="EC" id="2.1.1.192"/>
    </reaction>
</comment>
<comment type="cofactor">
    <cofactor evidence="1">
        <name>[4Fe-4S] cluster</name>
        <dbReference type="ChEBI" id="CHEBI:49883"/>
    </cofactor>
    <text evidence="1">Binds 1 [4Fe-4S] cluster. The cluster is coordinated with 3 cysteines and an exchangeable S-adenosyl-L-methionine.</text>
</comment>
<comment type="subcellular location">
    <subcellularLocation>
        <location evidence="1">Cytoplasm</location>
    </subcellularLocation>
</comment>
<comment type="miscellaneous">
    <text evidence="1">Reaction proceeds by a ping-pong mechanism involving intermediate methylation of a conserved cysteine residue.</text>
</comment>
<comment type="similarity">
    <text evidence="1">Belongs to the radical SAM superfamily. RlmN family.</text>
</comment>
<keyword id="KW-0004">4Fe-4S</keyword>
<keyword id="KW-0963">Cytoplasm</keyword>
<keyword id="KW-1015">Disulfide bond</keyword>
<keyword id="KW-0408">Iron</keyword>
<keyword id="KW-0411">Iron-sulfur</keyword>
<keyword id="KW-0479">Metal-binding</keyword>
<keyword id="KW-0489">Methyltransferase</keyword>
<keyword id="KW-0698">rRNA processing</keyword>
<keyword id="KW-0949">S-adenosyl-L-methionine</keyword>
<keyword id="KW-0808">Transferase</keyword>
<keyword id="KW-0819">tRNA processing</keyword>
<dbReference type="EC" id="2.1.1.192" evidence="1"/>
<dbReference type="EMBL" id="CP000241">
    <property type="protein sequence ID" value="ABF85420.1"/>
    <property type="molecule type" value="Genomic_DNA"/>
</dbReference>
<dbReference type="RefSeq" id="WP_000647748.1">
    <property type="nucleotide sequence ID" value="NC_008086.1"/>
</dbReference>
<dbReference type="SMR" id="Q1CRK2"/>
<dbReference type="KEGG" id="hpa:HPAG1_1353"/>
<dbReference type="HOGENOM" id="CLU_029101_2_0_7"/>
<dbReference type="GO" id="GO:0005737">
    <property type="term" value="C:cytoplasm"/>
    <property type="evidence" value="ECO:0007669"/>
    <property type="project" value="UniProtKB-SubCell"/>
</dbReference>
<dbReference type="GO" id="GO:0051539">
    <property type="term" value="F:4 iron, 4 sulfur cluster binding"/>
    <property type="evidence" value="ECO:0007669"/>
    <property type="project" value="UniProtKB-UniRule"/>
</dbReference>
<dbReference type="GO" id="GO:0046872">
    <property type="term" value="F:metal ion binding"/>
    <property type="evidence" value="ECO:0007669"/>
    <property type="project" value="UniProtKB-KW"/>
</dbReference>
<dbReference type="GO" id="GO:0070040">
    <property type="term" value="F:rRNA (adenine(2503)-C2-)-methyltransferase activity"/>
    <property type="evidence" value="ECO:0007669"/>
    <property type="project" value="UniProtKB-UniRule"/>
</dbReference>
<dbReference type="GO" id="GO:0019843">
    <property type="term" value="F:rRNA binding"/>
    <property type="evidence" value="ECO:0007669"/>
    <property type="project" value="UniProtKB-UniRule"/>
</dbReference>
<dbReference type="GO" id="GO:0002935">
    <property type="term" value="F:tRNA (adenine(37)-C2)-methyltransferase activity"/>
    <property type="evidence" value="ECO:0007669"/>
    <property type="project" value="UniProtKB-UniRule"/>
</dbReference>
<dbReference type="GO" id="GO:0000049">
    <property type="term" value="F:tRNA binding"/>
    <property type="evidence" value="ECO:0007669"/>
    <property type="project" value="UniProtKB-UniRule"/>
</dbReference>
<dbReference type="GO" id="GO:0070475">
    <property type="term" value="P:rRNA base methylation"/>
    <property type="evidence" value="ECO:0007669"/>
    <property type="project" value="UniProtKB-UniRule"/>
</dbReference>
<dbReference type="GO" id="GO:0030488">
    <property type="term" value="P:tRNA methylation"/>
    <property type="evidence" value="ECO:0007669"/>
    <property type="project" value="UniProtKB-UniRule"/>
</dbReference>
<dbReference type="CDD" id="cd01335">
    <property type="entry name" value="Radical_SAM"/>
    <property type="match status" value="1"/>
</dbReference>
<dbReference type="FunFam" id="3.20.20.70:FF:000014">
    <property type="entry name" value="Probable dual-specificity RNA methyltransferase RlmN"/>
    <property type="match status" value="1"/>
</dbReference>
<dbReference type="Gene3D" id="1.10.150.530">
    <property type="match status" value="1"/>
</dbReference>
<dbReference type="Gene3D" id="3.20.20.70">
    <property type="entry name" value="Aldolase class I"/>
    <property type="match status" value="1"/>
</dbReference>
<dbReference type="HAMAP" id="MF_01849">
    <property type="entry name" value="RNA_methyltr_RlmN"/>
    <property type="match status" value="1"/>
</dbReference>
<dbReference type="InterPro" id="IPR013785">
    <property type="entry name" value="Aldolase_TIM"/>
</dbReference>
<dbReference type="InterPro" id="IPR040072">
    <property type="entry name" value="Methyltransferase_A"/>
</dbReference>
<dbReference type="InterPro" id="IPR048641">
    <property type="entry name" value="RlmN_N"/>
</dbReference>
<dbReference type="InterPro" id="IPR027492">
    <property type="entry name" value="RNA_MTrfase_RlmN"/>
</dbReference>
<dbReference type="InterPro" id="IPR004383">
    <property type="entry name" value="rRNA_lsu_MTrfase_RlmN/Cfr"/>
</dbReference>
<dbReference type="InterPro" id="IPR007197">
    <property type="entry name" value="rSAM"/>
</dbReference>
<dbReference type="NCBIfam" id="TIGR00048">
    <property type="entry name" value="rRNA_mod_RlmN"/>
    <property type="match status" value="1"/>
</dbReference>
<dbReference type="PANTHER" id="PTHR30544">
    <property type="entry name" value="23S RRNA METHYLTRANSFERASE"/>
    <property type="match status" value="1"/>
</dbReference>
<dbReference type="PANTHER" id="PTHR30544:SF5">
    <property type="entry name" value="RADICAL SAM CORE DOMAIN-CONTAINING PROTEIN"/>
    <property type="match status" value="1"/>
</dbReference>
<dbReference type="Pfam" id="PF04055">
    <property type="entry name" value="Radical_SAM"/>
    <property type="match status" value="1"/>
</dbReference>
<dbReference type="Pfam" id="PF21016">
    <property type="entry name" value="RlmN_N"/>
    <property type="match status" value="1"/>
</dbReference>
<dbReference type="PIRSF" id="PIRSF006004">
    <property type="entry name" value="CHP00048"/>
    <property type="match status" value="1"/>
</dbReference>
<dbReference type="SFLD" id="SFLDF00275">
    <property type="entry name" value="adenosine_C2_methyltransferase"/>
    <property type="match status" value="1"/>
</dbReference>
<dbReference type="SFLD" id="SFLDS00029">
    <property type="entry name" value="Radical_SAM"/>
    <property type="match status" value="1"/>
</dbReference>
<dbReference type="SUPFAM" id="SSF102114">
    <property type="entry name" value="Radical SAM enzymes"/>
    <property type="match status" value="1"/>
</dbReference>
<dbReference type="PROSITE" id="PS51918">
    <property type="entry name" value="RADICAL_SAM"/>
    <property type="match status" value="1"/>
</dbReference>
<gene>
    <name evidence="1" type="primary">rlmN</name>
    <name type="ordered locus">HPAG1_1353</name>
</gene>
<protein>
    <recommendedName>
        <fullName evidence="1">Dual-specificity RNA methyltransferase RlmN</fullName>
        <ecNumber evidence="1">2.1.1.192</ecNumber>
    </recommendedName>
    <alternativeName>
        <fullName evidence="1">23S rRNA (adenine(2503)-C(2))-methyltransferase</fullName>
    </alternativeName>
    <alternativeName>
        <fullName evidence="1">23S rRNA m2A2503 methyltransferase</fullName>
    </alternativeName>
    <alternativeName>
        <fullName evidence="1">Ribosomal RNA large subunit methyltransferase N</fullName>
    </alternativeName>
    <alternativeName>
        <fullName evidence="1">tRNA (adenine(37)-C(2))-methyltransferase</fullName>
    </alternativeName>
    <alternativeName>
        <fullName evidence="1">tRNA m2A37 methyltransferase</fullName>
    </alternativeName>
</protein>
<evidence type="ECO:0000255" key="1">
    <source>
        <dbReference type="HAMAP-Rule" id="MF_01849"/>
    </source>
</evidence>
<evidence type="ECO:0000255" key="2">
    <source>
        <dbReference type="PROSITE-ProRule" id="PRU01266"/>
    </source>
</evidence>